<name>RL21_RHIWR</name>
<dbReference type="EMBL" id="CP000699">
    <property type="protein sequence ID" value="ABQ70236.1"/>
    <property type="molecule type" value="Genomic_DNA"/>
</dbReference>
<dbReference type="SMR" id="A5VD70"/>
<dbReference type="STRING" id="392499.Swit_3891"/>
<dbReference type="PaxDb" id="392499-Swit_3891"/>
<dbReference type="KEGG" id="swi:Swit_3891"/>
<dbReference type="eggNOG" id="COG0261">
    <property type="taxonomic scope" value="Bacteria"/>
</dbReference>
<dbReference type="HOGENOM" id="CLU_061463_1_2_5"/>
<dbReference type="OrthoDB" id="9813334at2"/>
<dbReference type="Proteomes" id="UP000001989">
    <property type="component" value="Chromosome"/>
</dbReference>
<dbReference type="GO" id="GO:0005737">
    <property type="term" value="C:cytoplasm"/>
    <property type="evidence" value="ECO:0007669"/>
    <property type="project" value="UniProtKB-ARBA"/>
</dbReference>
<dbReference type="GO" id="GO:1990904">
    <property type="term" value="C:ribonucleoprotein complex"/>
    <property type="evidence" value="ECO:0007669"/>
    <property type="project" value="UniProtKB-KW"/>
</dbReference>
<dbReference type="GO" id="GO:0005840">
    <property type="term" value="C:ribosome"/>
    <property type="evidence" value="ECO:0007669"/>
    <property type="project" value="UniProtKB-KW"/>
</dbReference>
<dbReference type="GO" id="GO:0019843">
    <property type="term" value="F:rRNA binding"/>
    <property type="evidence" value="ECO:0007669"/>
    <property type="project" value="UniProtKB-UniRule"/>
</dbReference>
<dbReference type="GO" id="GO:0003735">
    <property type="term" value="F:structural constituent of ribosome"/>
    <property type="evidence" value="ECO:0007669"/>
    <property type="project" value="InterPro"/>
</dbReference>
<dbReference type="GO" id="GO:0006412">
    <property type="term" value="P:translation"/>
    <property type="evidence" value="ECO:0007669"/>
    <property type="project" value="UniProtKB-UniRule"/>
</dbReference>
<dbReference type="HAMAP" id="MF_01363">
    <property type="entry name" value="Ribosomal_bL21"/>
    <property type="match status" value="1"/>
</dbReference>
<dbReference type="InterPro" id="IPR028909">
    <property type="entry name" value="bL21-like"/>
</dbReference>
<dbReference type="InterPro" id="IPR036164">
    <property type="entry name" value="bL21-like_sf"/>
</dbReference>
<dbReference type="InterPro" id="IPR001787">
    <property type="entry name" value="Ribosomal_bL21"/>
</dbReference>
<dbReference type="NCBIfam" id="TIGR00061">
    <property type="entry name" value="L21"/>
    <property type="match status" value="1"/>
</dbReference>
<dbReference type="PANTHER" id="PTHR21349">
    <property type="entry name" value="50S RIBOSOMAL PROTEIN L21"/>
    <property type="match status" value="1"/>
</dbReference>
<dbReference type="PANTHER" id="PTHR21349:SF0">
    <property type="entry name" value="LARGE RIBOSOMAL SUBUNIT PROTEIN BL21M"/>
    <property type="match status" value="1"/>
</dbReference>
<dbReference type="Pfam" id="PF00829">
    <property type="entry name" value="Ribosomal_L21p"/>
    <property type="match status" value="1"/>
</dbReference>
<dbReference type="SUPFAM" id="SSF141091">
    <property type="entry name" value="L21p-like"/>
    <property type="match status" value="1"/>
</dbReference>
<reference key="1">
    <citation type="journal article" date="2010" name="J. Bacteriol.">
        <title>Genome sequence of the dioxin-mineralizing bacterium Sphingomonas wittichii RW1.</title>
        <authorList>
            <person name="Miller T.R."/>
            <person name="Delcher A.L."/>
            <person name="Salzberg S.L."/>
            <person name="Saunders E."/>
            <person name="Detter J.C."/>
            <person name="Halden R.U."/>
        </authorList>
    </citation>
    <scope>NUCLEOTIDE SEQUENCE [LARGE SCALE GENOMIC DNA]</scope>
    <source>
        <strain>DSM 6014 / CCUG 31198 / JCM 15750 / NBRC 105917 / EY 4224 / RW1</strain>
    </source>
</reference>
<proteinExistence type="inferred from homology"/>
<sequence>MFAIVRTGGKQYRVAAGDKIVVEKLPGEAGSTVSLGDVLLAGEGAELKDVKGLTVSAEIIAQAKGEKVIVFKKRRRHNYRRRNGHRQQHTILKILSIGGEAKAKKAPAKAKADAPAAAEA</sequence>
<comment type="function">
    <text evidence="1">This protein binds to 23S rRNA in the presence of protein L20.</text>
</comment>
<comment type="subunit">
    <text evidence="1">Part of the 50S ribosomal subunit. Contacts protein L20.</text>
</comment>
<comment type="similarity">
    <text evidence="1">Belongs to the bacterial ribosomal protein bL21 family.</text>
</comment>
<gene>
    <name evidence="1" type="primary">rplU</name>
    <name type="ordered locus">Swit_3891</name>
</gene>
<evidence type="ECO:0000255" key="1">
    <source>
        <dbReference type="HAMAP-Rule" id="MF_01363"/>
    </source>
</evidence>
<evidence type="ECO:0000305" key="2"/>
<keyword id="KW-1185">Reference proteome</keyword>
<keyword id="KW-0687">Ribonucleoprotein</keyword>
<keyword id="KW-0689">Ribosomal protein</keyword>
<keyword id="KW-0694">RNA-binding</keyword>
<keyword id="KW-0699">rRNA-binding</keyword>
<feature type="chain" id="PRO_1000067903" description="Large ribosomal subunit protein bL21">
    <location>
        <begin position="1"/>
        <end position="120"/>
    </location>
</feature>
<accession>A5VD70</accession>
<protein>
    <recommendedName>
        <fullName evidence="1">Large ribosomal subunit protein bL21</fullName>
    </recommendedName>
    <alternativeName>
        <fullName evidence="2">50S ribosomal protein L21</fullName>
    </alternativeName>
</protein>
<organism>
    <name type="scientific">Rhizorhabdus wittichii (strain DSM 6014 / CCUG 31198 / JCM 15750 / NBRC 105917 / EY 4224 / RW1)</name>
    <name type="common">Sphingomonas wittichii</name>
    <dbReference type="NCBI Taxonomy" id="392499"/>
    <lineage>
        <taxon>Bacteria</taxon>
        <taxon>Pseudomonadati</taxon>
        <taxon>Pseudomonadota</taxon>
        <taxon>Alphaproteobacteria</taxon>
        <taxon>Sphingomonadales</taxon>
        <taxon>Sphingomonadaceae</taxon>
        <taxon>Rhizorhabdus</taxon>
    </lineage>
</organism>